<organism>
    <name type="scientific">Rattus norvegicus</name>
    <name type="common">Rat</name>
    <dbReference type="NCBI Taxonomy" id="10116"/>
    <lineage>
        <taxon>Eukaryota</taxon>
        <taxon>Metazoa</taxon>
        <taxon>Chordata</taxon>
        <taxon>Craniata</taxon>
        <taxon>Vertebrata</taxon>
        <taxon>Euteleostomi</taxon>
        <taxon>Mammalia</taxon>
        <taxon>Eutheria</taxon>
        <taxon>Euarchontoglires</taxon>
        <taxon>Glires</taxon>
        <taxon>Rodentia</taxon>
        <taxon>Myomorpha</taxon>
        <taxon>Muroidea</taxon>
        <taxon>Muridae</taxon>
        <taxon>Murinae</taxon>
        <taxon>Rattus</taxon>
    </lineage>
</organism>
<feature type="transit peptide" description="Mitochondrion" evidence="5">
    <location>
        <begin position="1"/>
        <end position="71"/>
    </location>
</feature>
<feature type="chain" id="PRO_0000025420" description="[Pyruvate dehydrogenase [acetyl-transferring]]-phosphatase 1, mitochondrial">
    <location>
        <begin position="72"/>
        <end position="538"/>
    </location>
</feature>
<feature type="domain" description="PPM-type phosphatase" evidence="3">
    <location>
        <begin position="109"/>
        <end position="525"/>
    </location>
</feature>
<feature type="binding site" evidence="5 9">
    <location>
        <position position="144"/>
    </location>
    <ligand>
        <name>Mg(2+)</name>
        <dbReference type="ChEBI" id="CHEBI:18420"/>
        <label>1</label>
    </ligand>
</feature>
<feature type="binding site" evidence="5 9">
    <location>
        <position position="144"/>
    </location>
    <ligand>
        <name>Mg(2+)</name>
        <dbReference type="ChEBI" id="CHEBI:18420"/>
        <label>2</label>
    </ligand>
</feature>
<feature type="binding site" evidence="5 9">
    <location>
        <position position="145"/>
    </location>
    <ligand>
        <name>Mg(2+)</name>
        <dbReference type="ChEBI" id="CHEBI:18420"/>
        <label>1</label>
    </ligand>
</feature>
<feature type="binding site" evidence="5 9">
    <location>
        <position position="418"/>
    </location>
    <ligand>
        <name>Mg(2+)</name>
        <dbReference type="ChEBI" id="CHEBI:18420"/>
        <label>2</label>
    </ligand>
</feature>
<feature type="binding site" evidence="5 9">
    <location>
        <position position="516"/>
    </location>
    <ligand>
        <name>Mg(2+)</name>
        <dbReference type="ChEBI" id="CHEBI:18420"/>
        <label>2</label>
    </ligand>
</feature>
<feature type="modified residue" description="N6-acetyllysine" evidence="2">
    <location>
        <position position="202"/>
    </location>
</feature>
<feature type="mutagenesis site" description="Decreases protein serine/threonine phosphatase activity." evidence="4">
    <original>N</original>
    <variation>A</variation>
    <location>
        <position position="120"/>
    </location>
</feature>
<feature type="mutagenesis site" description="Abolishes protein serine/threonine phosphatase activity. Abolishes binding to Mg(2+)." evidence="4">
    <original>D</original>
    <variation>A</variation>
    <location>
        <position position="125"/>
    </location>
</feature>
<feature type="mutagenesis site" description="Abolishes protein serine/threonine phosphatase activity. Abolishes binding to Mg(2+)." evidence="4">
    <original>D</original>
    <variation>A</variation>
    <location>
        <position position="418"/>
    </location>
</feature>
<feature type="mutagenesis site" description="Abolishes protein serine/threonine phosphatase activity. Does not affect binding to Mg(2+)." evidence="4">
    <original>D</original>
    <variation>A</variation>
    <location>
        <position position="516"/>
    </location>
</feature>
<feature type="sequence conflict" description="In Ref. 1; AAC40167." evidence="7" ref="1">
    <original>Q</original>
    <variation>R</variation>
    <location>
        <position position="116"/>
    </location>
</feature>
<feature type="sequence conflict" description="In Ref. 1; AAC40167." evidence="7" ref="1">
    <original>A</original>
    <variation>T</variation>
    <location>
        <position position="130"/>
    </location>
</feature>
<feature type="sequence conflict" description="In Ref. 1; AAC40167." evidence="7" ref="1">
    <original>S</original>
    <variation>G</variation>
    <location>
        <position position="211"/>
    </location>
</feature>
<feature type="sequence conflict" description="In Ref. 1; AAC40167." evidence="7" ref="1">
    <original>E</original>
    <variation>Q</variation>
    <location>
        <position position="323"/>
    </location>
</feature>
<feature type="helix" evidence="10">
    <location>
        <begin position="82"/>
        <end position="92"/>
    </location>
</feature>
<feature type="strand" evidence="10">
    <location>
        <begin position="94"/>
        <end position="97"/>
    </location>
</feature>
<feature type="turn" evidence="10">
    <location>
        <begin position="102"/>
        <end position="104"/>
    </location>
</feature>
<feature type="strand" evidence="10">
    <location>
        <begin position="108"/>
        <end position="117"/>
    </location>
</feature>
<feature type="strand" evidence="10">
    <location>
        <begin position="120"/>
        <end position="122"/>
    </location>
</feature>
<feature type="strand" evidence="10">
    <location>
        <begin position="125"/>
        <end position="136"/>
    </location>
</feature>
<feature type="strand" evidence="10">
    <location>
        <begin position="138"/>
        <end position="149"/>
    </location>
</feature>
<feature type="helix" evidence="10">
    <location>
        <begin position="150"/>
        <end position="167"/>
    </location>
</feature>
<feature type="helix" evidence="10">
    <location>
        <begin position="170"/>
        <end position="177"/>
    </location>
</feature>
<feature type="turn" evidence="10">
    <location>
        <begin position="178"/>
        <end position="180"/>
    </location>
</feature>
<feature type="strand" evidence="10">
    <location>
        <begin position="190"/>
        <end position="192"/>
    </location>
</feature>
<feature type="helix" evidence="10">
    <location>
        <begin position="205"/>
        <end position="221"/>
    </location>
</feature>
<feature type="helix" evidence="10">
    <location>
        <begin position="232"/>
        <end position="253"/>
    </location>
</feature>
<feature type="helix" evidence="10">
    <location>
        <begin position="258"/>
        <end position="269"/>
    </location>
</feature>
<feature type="strand" evidence="10">
    <location>
        <begin position="270"/>
        <end position="272"/>
    </location>
</feature>
<feature type="strand" evidence="10">
    <location>
        <begin position="274"/>
        <end position="280"/>
    </location>
</feature>
<feature type="strand" evidence="10">
    <location>
        <begin position="283"/>
        <end position="291"/>
    </location>
</feature>
<feature type="strand" evidence="10">
    <location>
        <begin position="293"/>
        <end position="299"/>
    </location>
</feature>
<feature type="strand" evidence="10">
    <location>
        <begin position="305"/>
        <end position="309"/>
    </location>
</feature>
<feature type="helix" evidence="10">
    <location>
        <begin position="319"/>
        <end position="327"/>
    </location>
</feature>
<feature type="helix" evidence="10">
    <location>
        <begin position="331"/>
        <end position="333"/>
    </location>
</feature>
<feature type="helix" evidence="10">
    <location>
        <begin position="334"/>
        <end position="337"/>
    </location>
</feature>
<feature type="strand" evidence="10">
    <location>
        <begin position="338"/>
        <end position="343"/>
    </location>
</feature>
<feature type="turn" evidence="10">
    <location>
        <begin position="344"/>
        <end position="346"/>
    </location>
</feature>
<feature type="strand" evidence="10">
    <location>
        <begin position="347"/>
        <end position="351"/>
    </location>
</feature>
<feature type="helix" evidence="10">
    <location>
        <begin position="356"/>
        <end position="358"/>
    </location>
</feature>
<feature type="helix" evidence="10">
    <location>
        <begin position="362"/>
        <end position="369"/>
    </location>
</feature>
<feature type="strand" evidence="10">
    <location>
        <begin position="370"/>
        <end position="372"/>
    </location>
</feature>
<feature type="strand" evidence="10">
    <location>
        <begin position="390"/>
        <end position="392"/>
    </location>
</feature>
<feature type="strand" evidence="10">
    <location>
        <begin position="400"/>
        <end position="405"/>
    </location>
</feature>
<feature type="strand" evidence="10">
    <location>
        <begin position="410"/>
        <end position="416"/>
    </location>
</feature>
<feature type="helix" evidence="10">
    <location>
        <begin position="418"/>
        <end position="421"/>
    </location>
</feature>
<feature type="helix" evidence="10">
    <location>
        <begin position="426"/>
        <end position="437"/>
    </location>
</feature>
<feature type="helix" evidence="10">
    <location>
        <begin position="478"/>
        <end position="487"/>
    </location>
</feature>
<feature type="strand" evidence="10">
    <location>
        <begin position="518"/>
        <end position="525"/>
    </location>
</feature>
<feature type="helix" evidence="10">
    <location>
        <begin position="527"/>
        <end position="535"/>
    </location>
</feature>
<keyword id="KW-0002">3D-structure</keyword>
<keyword id="KW-0007">Acetylation</keyword>
<keyword id="KW-0106">Calcium</keyword>
<keyword id="KW-0378">Hydrolase</keyword>
<keyword id="KW-0460">Magnesium</keyword>
<keyword id="KW-0479">Metal-binding</keyword>
<keyword id="KW-0496">Mitochondrion</keyword>
<keyword id="KW-0904">Protein phosphatase</keyword>
<keyword id="KW-1185">Reference proteome</keyword>
<keyword id="KW-0809">Transit peptide</keyword>
<dbReference type="EC" id="3.1.3.43" evidence="4 6"/>
<dbReference type="EMBL" id="AF062740">
    <property type="protein sequence ID" value="AAC40167.1"/>
    <property type="molecule type" value="mRNA"/>
</dbReference>
<dbReference type="EMBL" id="AABR07047259">
    <property type="status" value="NOT_ANNOTATED_CDS"/>
    <property type="molecule type" value="Genomic_DNA"/>
</dbReference>
<dbReference type="RefSeq" id="NP_001416688.1">
    <property type="nucleotide sequence ID" value="NM_001429759.1"/>
</dbReference>
<dbReference type="RefSeq" id="NP_062245.2">
    <property type="nucleotide sequence ID" value="NM_019372.5"/>
</dbReference>
<dbReference type="PDB" id="2PNQ">
    <property type="method" value="X-ray"/>
    <property type="resolution" value="1.81 A"/>
    <property type="chains" value="A/B=72-538"/>
</dbReference>
<dbReference type="PDBsum" id="2PNQ"/>
<dbReference type="SMR" id="O88483"/>
<dbReference type="FunCoup" id="O88483">
    <property type="interactions" value="2647"/>
</dbReference>
<dbReference type="IntAct" id="O88483">
    <property type="interactions" value="5"/>
</dbReference>
<dbReference type="STRING" id="10116.ENSRNOP00000070525"/>
<dbReference type="iPTMnet" id="O88483"/>
<dbReference type="PhosphoSitePlus" id="O88483"/>
<dbReference type="PaxDb" id="10116-ENSRNOP00000062054"/>
<dbReference type="Ensembl" id="ENSRNOT00000090376.2">
    <property type="protein sequence ID" value="ENSRNOP00000070525.2"/>
    <property type="gene ID" value="ENSRNOG00000016180.6"/>
</dbReference>
<dbReference type="GeneID" id="54705"/>
<dbReference type="KEGG" id="rno:54705"/>
<dbReference type="UCSC" id="RGD:620393">
    <property type="organism name" value="rat"/>
</dbReference>
<dbReference type="AGR" id="RGD:620393"/>
<dbReference type="CTD" id="54704"/>
<dbReference type="RGD" id="620393">
    <property type="gene designation" value="Pdp1"/>
</dbReference>
<dbReference type="eggNOG" id="KOG0700">
    <property type="taxonomic scope" value="Eukaryota"/>
</dbReference>
<dbReference type="GeneTree" id="ENSGT00940000156368"/>
<dbReference type="InParanoid" id="O88483"/>
<dbReference type="OMA" id="DVRTPPY"/>
<dbReference type="OrthoDB" id="420076at2759"/>
<dbReference type="PhylomeDB" id="O88483"/>
<dbReference type="BRENDA" id="3.1.3.43">
    <property type="organism ID" value="5301"/>
</dbReference>
<dbReference type="Reactome" id="R-RNO-204174">
    <property type="pathway name" value="Regulation of pyruvate dehydrogenase (PDH) complex"/>
</dbReference>
<dbReference type="SABIO-RK" id="O88483"/>
<dbReference type="EvolutionaryTrace" id="O88483"/>
<dbReference type="PRO" id="PR:O88483"/>
<dbReference type="Proteomes" id="UP000002494">
    <property type="component" value="Chromosome 5"/>
</dbReference>
<dbReference type="Bgee" id="ENSRNOG00000016180">
    <property type="expression patterns" value="Expressed in skeletal muscle tissue and 20 other cell types or tissues"/>
</dbReference>
<dbReference type="GO" id="GO:0005739">
    <property type="term" value="C:mitochondrion"/>
    <property type="evidence" value="ECO:0000314"/>
    <property type="project" value="UniProtKB"/>
</dbReference>
<dbReference type="GO" id="GO:0004741">
    <property type="term" value="F:[pyruvate dehydrogenase (acetyl-transferring)]-phosphatase activity"/>
    <property type="evidence" value="ECO:0000266"/>
    <property type="project" value="RGD"/>
</dbReference>
<dbReference type="GO" id="GO:0005509">
    <property type="term" value="F:calcium ion binding"/>
    <property type="evidence" value="ECO:0000315"/>
    <property type="project" value="RGD"/>
</dbReference>
<dbReference type="GO" id="GO:0000287">
    <property type="term" value="F:magnesium ion binding"/>
    <property type="evidence" value="ECO:0000314"/>
    <property type="project" value="RGD"/>
</dbReference>
<dbReference type="GO" id="GO:0004722">
    <property type="term" value="F:protein serine/threonine phosphatase activity"/>
    <property type="evidence" value="ECO:0000315"/>
    <property type="project" value="RGD"/>
</dbReference>
<dbReference type="GO" id="GO:0044877">
    <property type="term" value="F:protein-containing complex binding"/>
    <property type="evidence" value="ECO:0000315"/>
    <property type="project" value="RGD"/>
</dbReference>
<dbReference type="GO" id="GO:0007165">
    <property type="term" value="P:signal transduction"/>
    <property type="evidence" value="ECO:0000318"/>
    <property type="project" value="GO_Central"/>
</dbReference>
<dbReference type="CDD" id="cd00143">
    <property type="entry name" value="PP2Cc"/>
    <property type="match status" value="1"/>
</dbReference>
<dbReference type="DisProt" id="DP02657"/>
<dbReference type="Gene3D" id="3.60.40.10">
    <property type="entry name" value="PPM-type phosphatase domain"/>
    <property type="match status" value="1"/>
</dbReference>
<dbReference type="InterPro" id="IPR015655">
    <property type="entry name" value="PP2C"/>
</dbReference>
<dbReference type="InterPro" id="IPR000222">
    <property type="entry name" value="PP2C_BS"/>
</dbReference>
<dbReference type="InterPro" id="IPR036457">
    <property type="entry name" value="PPM-type-like_dom_sf"/>
</dbReference>
<dbReference type="InterPro" id="IPR001932">
    <property type="entry name" value="PPM-type_phosphatase-like_dom"/>
</dbReference>
<dbReference type="PANTHER" id="PTHR13832:SF627">
    <property type="entry name" value="[PYRUVATE DEHYDROGENASE [ACETYL-TRANSFERRING]]-PHOSPHATASE 1, MITOCHONDRIAL"/>
    <property type="match status" value="1"/>
</dbReference>
<dbReference type="PANTHER" id="PTHR13832">
    <property type="entry name" value="PROTEIN PHOSPHATASE 2C"/>
    <property type="match status" value="1"/>
</dbReference>
<dbReference type="Pfam" id="PF00481">
    <property type="entry name" value="PP2C"/>
    <property type="match status" value="1"/>
</dbReference>
<dbReference type="SMART" id="SM00332">
    <property type="entry name" value="PP2Cc"/>
    <property type="match status" value="1"/>
</dbReference>
<dbReference type="SUPFAM" id="SSF81606">
    <property type="entry name" value="PP2C-like"/>
    <property type="match status" value="1"/>
</dbReference>
<dbReference type="PROSITE" id="PS01032">
    <property type="entry name" value="PPM_1"/>
    <property type="match status" value="1"/>
</dbReference>
<dbReference type="PROSITE" id="PS51746">
    <property type="entry name" value="PPM_2"/>
    <property type="match status" value="1"/>
</dbReference>
<accession>O88483</accession>
<accession>A1L1J4</accession>
<accession>F1LP63</accession>
<gene>
    <name type="primary">Pdp1</name>
    <name type="synonym">Ppm2c</name>
</gene>
<proteinExistence type="evidence at protein level"/>
<comment type="function">
    <text evidence="4 6">Mitochondrial enzyme that catalyzes the dephosphorylation and concomitant reactivation of the alpha subunit of the E1 component of the pyruvate dehydrogenase complex (PDC), thereby stimulating the conversion of pyruvate into acetyl-CoA.</text>
</comment>
<comment type="catalytic activity">
    <reaction evidence="4 6">
        <text>O-phospho-L-seryl-[pyruvate dehydrogenase E1 alpha subunit] + H2O = L-seryl-[pyruvate dehydrogenase E1 alpha subunit] + phosphate</text>
        <dbReference type="Rhea" id="RHEA:12669"/>
        <dbReference type="Rhea" id="RHEA-COMP:13689"/>
        <dbReference type="Rhea" id="RHEA-COMP:13690"/>
        <dbReference type="ChEBI" id="CHEBI:15377"/>
        <dbReference type="ChEBI" id="CHEBI:29999"/>
        <dbReference type="ChEBI" id="CHEBI:43474"/>
        <dbReference type="ChEBI" id="CHEBI:83421"/>
        <dbReference type="EC" id="3.1.3.43"/>
    </reaction>
    <physiologicalReaction direction="left-to-right" evidence="8">
        <dbReference type="Rhea" id="RHEA:12670"/>
    </physiologicalReaction>
</comment>
<comment type="cofactor">
    <cofactor evidence="1">
        <name>Mn(2+)</name>
        <dbReference type="ChEBI" id="CHEBI:29035"/>
    </cofactor>
    <cofactor evidence="5 6">
        <name>Mg(2+)</name>
        <dbReference type="ChEBI" id="CHEBI:18420"/>
    </cofactor>
    <text evidence="1 5">Binds 2 Mn(2+) ions per subunit (By similarity). Binds 2 Mg(2+) ions per subunit (PubMed:17532339). Mn(2+) can substitute Mg2(+) for catalytic activity (By similarity).</text>
</comment>
<comment type="activity regulation">
    <text evidence="1 2">Magnesium-dependent and calcium-stimulated (By similarity). PDP1 activity strongly depends on its Ca(2+)-dependent binding to the lipoyl domain of E2 subunit of component of the pyruvate dehydrogenase complex (By similarity).</text>
</comment>
<comment type="biophysicochemical properties">
    <kinetics>
        <KM evidence="6">1.5 mM for Mg(2+) (in absence of Ca(2+))</KM>
        <KM evidence="6">0.7 mM for Mg(2+) (in presence of Ca(2+))</KM>
    </kinetics>
</comment>
<comment type="subunit">
    <text evidence="1">Heterodimer of a catalytic (PDP1) and a regulatory (PDPR) subunit.</text>
</comment>
<comment type="subcellular location">
    <subcellularLocation>
        <location evidence="6">Mitochondrion</location>
    </subcellularLocation>
</comment>
<comment type="tissue specificity">
    <text evidence="6">Highly expressed in skeletal muscle.</text>
</comment>
<comment type="similarity">
    <text evidence="7">Belongs to the PP2C family.</text>
</comment>
<sequence>MPAPTQLFFPLVRNCELSRIYGTACYCHHKHLCCSPPYIPQNRLRYTPHPAYATFCRPRENWWQYTQGRRYASTPQKFYLTPPQVNSILKANEYSFKVPEFDGKNVSSILGFDSNQLPANAPIEDRRSAATCLQTRGMLLGVFDGHAGCACSQAVSERLFYYIAVSLLPHETLLEIENAVESGRALLPILQWHKHPNDYFSKEASKLYFNSLRTYWQELIDLNTGESADIDVKEALINAFKRLDNDISLEAQVGDPNSFLNYLVLRVAFSGATACVAHVDGVDLHVANTGDSRAMLGVQEEDGSWSAVTLSNDHNAQNERELERLKLEHPKNEAKSVVKQDRLLGLLMPFRAFGDVKFKWSIDLQKRVIESGPDQLNDNEYTKFIPPNYHTPPYLTAEPEVTYHRLRPQDKFLVLATDGLWETMHRQDVVRIVGEYLTGMHHQQPIAVGGYKVTLGQMHGLLTERRAKMSSVFEDQNAATHLIRHAVGNNEFGAVDHERLSKMLSLPEELARMYRDDITIIVVQFNSHVVGAYQNQEQ</sequence>
<name>PDP1_RAT</name>
<evidence type="ECO:0000250" key="1">
    <source>
        <dbReference type="UniProtKB" id="P35816"/>
    </source>
</evidence>
<evidence type="ECO:0000250" key="2">
    <source>
        <dbReference type="UniProtKB" id="Q9P0J1"/>
    </source>
</evidence>
<evidence type="ECO:0000255" key="3">
    <source>
        <dbReference type="PROSITE-ProRule" id="PRU01082"/>
    </source>
</evidence>
<evidence type="ECO:0000269" key="4">
    <source>
    </source>
</evidence>
<evidence type="ECO:0000269" key="5">
    <source>
    </source>
</evidence>
<evidence type="ECO:0000269" key="6">
    <source>
    </source>
</evidence>
<evidence type="ECO:0000305" key="7"/>
<evidence type="ECO:0000305" key="8">
    <source>
    </source>
</evidence>
<evidence type="ECO:0007744" key="9">
    <source>
        <dbReference type="PDB" id="2PNQ"/>
    </source>
</evidence>
<evidence type="ECO:0007829" key="10">
    <source>
        <dbReference type="PDB" id="2PNQ"/>
    </source>
</evidence>
<protein>
    <recommendedName>
        <fullName>[Pyruvate dehydrogenase [acetyl-transferring]]-phosphatase 1, mitochondrial</fullName>
        <shortName>PDP 1</shortName>
        <ecNumber evidence="4 6">3.1.3.43</ecNumber>
    </recommendedName>
    <alternativeName>
        <fullName>Protein phosphatase 2C</fullName>
    </alternativeName>
    <alternativeName>
        <fullName>Pyruvate dehydrogenase phosphatase catalytic subunit 1</fullName>
        <shortName>PDPC 1</shortName>
    </alternativeName>
</protein>
<reference key="1">
    <citation type="journal article" date="1998" name="J. Biol. Chem.">
        <title>Isoenzymes of pyruvate dehydrogenase phosphatase. DNA-derived amino acid sequences, expression, and regulation.</title>
        <authorList>
            <person name="Huang B."/>
            <person name="Gudi R."/>
            <person name="Wu P."/>
            <person name="Harris R.A."/>
            <person name="Hamilton J."/>
            <person name="Popov K.M."/>
        </authorList>
    </citation>
    <scope>NUCLEOTIDE SEQUENCE [MRNA]</scope>
    <scope>FUNCTION</scope>
    <scope>CATALYTIC ACTIVITY</scope>
    <scope>BIOPHYSICOCHEMICAL PROPERTIES</scope>
    <scope>SUBCELLULAR LOCATION</scope>
    <scope>TISSUE SPECIFICITY</scope>
    <scope>COFACTOR</scope>
    <source>
        <tissue>Heart</tissue>
    </source>
</reference>
<reference key="2">
    <citation type="journal article" date="2004" name="Nature">
        <title>Genome sequence of the Brown Norway rat yields insights into mammalian evolution.</title>
        <authorList>
            <person name="Gibbs R.A."/>
            <person name="Weinstock G.M."/>
            <person name="Metzker M.L."/>
            <person name="Muzny D.M."/>
            <person name="Sodergren E.J."/>
            <person name="Scherer S."/>
            <person name="Scott G."/>
            <person name="Steffen D."/>
            <person name="Worley K.C."/>
            <person name="Burch P.E."/>
            <person name="Okwuonu G."/>
            <person name="Hines S."/>
            <person name="Lewis L."/>
            <person name="Deramo C."/>
            <person name="Delgado O."/>
            <person name="Dugan-Rocha S."/>
            <person name="Miner G."/>
            <person name="Morgan M."/>
            <person name="Hawes A."/>
            <person name="Gill R."/>
            <person name="Holt R.A."/>
            <person name="Adams M.D."/>
            <person name="Amanatides P.G."/>
            <person name="Baden-Tillson H."/>
            <person name="Barnstead M."/>
            <person name="Chin S."/>
            <person name="Evans C.A."/>
            <person name="Ferriera S."/>
            <person name="Fosler C."/>
            <person name="Glodek A."/>
            <person name="Gu Z."/>
            <person name="Jennings D."/>
            <person name="Kraft C.L."/>
            <person name="Nguyen T."/>
            <person name="Pfannkoch C.M."/>
            <person name="Sitter C."/>
            <person name="Sutton G.G."/>
            <person name="Venter J.C."/>
            <person name="Woodage T."/>
            <person name="Smith D."/>
            <person name="Lee H.-M."/>
            <person name="Gustafson E."/>
            <person name="Cahill P."/>
            <person name="Kana A."/>
            <person name="Doucette-Stamm L."/>
            <person name="Weinstock K."/>
            <person name="Fechtel K."/>
            <person name="Weiss R.B."/>
            <person name="Dunn D.M."/>
            <person name="Green E.D."/>
            <person name="Blakesley R.W."/>
            <person name="Bouffard G.G."/>
            <person name="De Jong P.J."/>
            <person name="Osoegawa K."/>
            <person name="Zhu B."/>
            <person name="Marra M."/>
            <person name="Schein J."/>
            <person name="Bosdet I."/>
            <person name="Fjell C."/>
            <person name="Jones S."/>
            <person name="Krzywinski M."/>
            <person name="Mathewson C."/>
            <person name="Siddiqui A."/>
            <person name="Wye N."/>
            <person name="McPherson J."/>
            <person name="Zhao S."/>
            <person name="Fraser C.M."/>
            <person name="Shetty J."/>
            <person name="Shatsman S."/>
            <person name="Geer K."/>
            <person name="Chen Y."/>
            <person name="Abramzon S."/>
            <person name="Nierman W.C."/>
            <person name="Havlak P.H."/>
            <person name="Chen R."/>
            <person name="Durbin K.J."/>
            <person name="Egan A."/>
            <person name="Ren Y."/>
            <person name="Song X.-Z."/>
            <person name="Li B."/>
            <person name="Liu Y."/>
            <person name="Qin X."/>
            <person name="Cawley S."/>
            <person name="Cooney A.J."/>
            <person name="D'Souza L.M."/>
            <person name="Martin K."/>
            <person name="Wu J.Q."/>
            <person name="Gonzalez-Garay M.L."/>
            <person name="Jackson A.R."/>
            <person name="Kalafus K.J."/>
            <person name="McLeod M.P."/>
            <person name="Milosavljevic A."/>
            <person name="Virk D."/>
            <person name="Volkov A."/>
            <person name="Wheeler D.A."/>
            <person name="Zhang Z."/>
            <person name="Bailey J.A."/>
            <person name="Eichler E.E."/>
            <person name="Tuzun E."/>
            <person name="Birney E."/>
            <person name="Mongin E."/>
            <person name="Ureta-Vidal A."/>
            <person name="Woodwark C."/>
            <person name="Zdobnov E."/>
            <person name="Bork P."/>
            <person name="Suyama M."/>
            <person name="Torrents D."/>
            <person name="Alexandersson M."/>
            <person name="Trask B.J."/>
            <person name="Young J.M."/>
            <person name="Huang H."/>
            <person name="Wang H."/>
            <person name="Xing H."/>
            <person name="Daniels S."/>
            <person name="Gietzen D."/>
            <person name="Schmidt J."/>
            <person name="Stevens K."/>
            <person name="Vitt U."/>
            <person name="Wingrove J."/>
            <person name="Camara F."/>
            <person name="Mar Alba M."/>
            <person name="Abril J.F."/>
            <person name="Guigo R."/>
            <person name="Smit A."/>
            <person name="Dubchak I."/>
            <person name="Rubin E.M."/>
            <person name="Couronne O."/>
            <person name="Poliakov A."/>
            <person name="Huebner N."/>
            <person name="Ganten D."/>
            <person name="Goesele C."/>
            <person name="Hummel O."/>
            <person name="Kreitler T."/>
            <person name="Lee Y.-A."/>
            <person name="Monti J."/>
            <person name="Schulz H."/>
            <person name="Zimdahl H."/>
            <person name="Himmelbauer H."/>
            <person name="Lehrach H."/>
            <person name="Jacob H.J."/>
            <person name="Bromberg S."/>
            <person name="Gullings-Handley J."/>
            <person name="Jensen-Seaman M.I."/>
            <person name="Kwitek A.E."/>
            <person name="Lazar J."/>
            <person name="Pasko D."/>
            <person name="Tonellato P.J."/>
            <person name="Twigger S."/>
            <person name="Ponting C.P."/>
            <person name="Duarte J.M."/>
            <person name="Rice S."/>
            <person name="Goodstadt L."/>
            <person name="Beatson S.A."/>
            <person name="Emes R.D."/>
            <person name="Winter E.E."/>
            <person name="Webber C."/>
            <person name="Brandt P."/>
            <person name="Nyakatura G."/>
            <person name="Adetobi M."/>
            <person name="Chiaromonte F."/>
            <person name="Elnitski L."/>
            <person name="Eswara P."/>
            <person name="Hardison R.C."/>
            <person name="Hou M."/>
            <person name="Kolbe D."/>
            <person name="Makova K."/>
            <person name="Miller W."/>
            <person name="Nekrutenko A."/>
            <person name="Riemer C."/>
            <person name="Schwartz S."/>
            <person name="Taylor J."/>
            <person name="Yang S."/>
            <person name="Zhang Y."/>
            <person name="Lindpaintner K."/>
            <person name="Andrews T.D."/>
            <person name="Caccamo M."/>
            <person name="Clamp M."/>
            <person name="Clarke L."/>
            <person name="Curwen V."/>
            <person name="Durbin R.M."/>
            <person name="Eyras E."/>
            <person name="Searle S.M."/>
            <person name="Cooper G.M."/>
            <person name="Batzoglou S."/>
            <person name="Brudno M."/>
            <person name="Sidow A."/>
            <person name="Stone E.A."/>
            <person name="Payseur B.A."/>
            <person name="Bourque G."/>
            <person name="Lopez-Otin C."/>
            <person name="Puente X.S."/>
            <person name="Chakrabarti K."/>
            <person name="Chatterji S."/>
            <person name="Dewey C."/>
            <person name="Pachter L."/>
            <person name="Bray N."/>
            <person name="Yap V.B."/>
            <person name="Caspi A."/>
            <person name="Tesler G."/>
            <person name="Pevzner P.A."/>
            <person name="Haussler D."/>
            <person name="Roskin K.M."/>
            <person name="Baertsch R."/>
            <person name="Clawson H."/>
            <person name="Furey T.S."/>
            <person name="Hinrichs A.S."/>
            <person name="Karolchik D."/>
            <person name="Kent W.J."/>
            <person name="Rosenbloom K.R."/>
            <person name="Trumbower H."/>
            <person name="Weirauch M."/>
            <person name="Cooper D.N."/>
            <person name="Stenson P.D."/>
            <person name="Ma B."/>
            <person name="Brent M."/>
            <person name="Arumugam M."/>
            <person name="Shteynberg D."/>
            <person name="Copley R.R."/>
            <person name="Taylor M.S."/>
            <person name="Riethman H."/>
            <person name="Mudunuri U."/>
            <person name="Peterson J."/>
            <person name="Guyer M."/>
            <person name="Felsenfeld A."/>
            <person name="Old S."/>
            <person name="Mockrin S."/>
            <person name="Collins F.S."/>
        </authorList>
    </citation>
    <scope>NUCLEOTIDE SEQUENCE [LARGE SCALE GENOMIC DNA]</scope>
    <source>
        <strain>Brown Norway</strain>
    </source>
</reference>
<reference key="3">
    <citation type="journal article" date="2004" name="Biochim. Biophys. Acta">
        <title>Probing a putative active site of the catalytic subunit of pyruvate dehydrogenase phosphatase 1 (PDP1c) by site-directed mutagenesis.</title>
        <authorList>
            <person name="Karpova T."/>
            <person name="Danchuk S."/>
            <person name="Huang B."/>
            <person name="Popov K.M."/>
        </authorList>
    </citation>
    <scope>FUNCTION</scope>
    <scope>CATALYTIC ACTIVITY</scope>
    <scope>MUTAGENESIS OF ASN-120; ASP-125; ASP-418 AND ASP-516</scope>
</reference>
<reference key="4">
    <citation type="journal article" date="2007" name="J. Mol. Biol.">
        <title>Crystal structure of pyruvate dehydrogenase phosphatase 1 and its functional implications.</title>
        <authorList>
            <person name="Vassylyev D.G."/>
            <person name="Symersky J."/>
        </authorList>
    </citation>
    <scope>X-RAY CRYSTALLOGRAPHY (1.81 ANGSTROMS) OF 72-538 IN COMPLEX WITH MG(2+)</scope>
</reference>